<comment type="function">
    <text evidence="1">Catalyzes the dephosphorylation of undecaprenyl diphosphate (UPP). Confers resistance to bacitracin.</text>
</comment>
<comment type="catalytic activity">
    <reaction evidence="1">
        <text>di-trans,octa-cis-undecaprenyl diphosphate + H2O = di-trans,octa-cis-undecaprenyl phosphate + phosphate + H(+)</text>
        <dbReference type="Rhea" id="RHEA:28094"/>
        <dbReference type="ChEBI" id="CHEBI:15377"/>
        <dbReference type="ChEBI" id="CHEBI:15378"/>
        <dbReference type="ChEBI" id="CHEBI:43474"/>
        <dbReference type="ChEBI" id="CHEBI:58405"/>
        <dbReference type="ChEBI" id="CHEBI:60392"/>
        <dbReference type="EC" id="3.6.1.27"/>
    </reaction>
</comment>
<comment type="subcellular location">
    <subcellularLocation>
        <location evidence="1">Cell inner membrane</location>
        <topology evidence="1">Multi-pass membrane protein</topology>
    </subcellularLocation>
</comment>
<comment type="miscellaneous">
    <text>Bacitracin is thought to be involved in the inhibition of peptidoglycan synthesis by sequestering undecaprenyl diphosphate, thereby reducing the pool of lipid carrier available.</text>
</comment>
<comment type="similarity">
    <text evidence="1">Belongs to the UppP family.</text>
</comment>
<organism>
    <name type="scientific">Stenotrophomonas maltophilia (strain R551-3)</name>
    <dbReference type="NCBI Taxonomy" id="391008"/>
    <lineage>
        <taxon>Bacteria</taxon>
        <taxon>Pseudomonadati</taxon>
        <taxon>Pseudomonadota</taxon>
        <taxon>Gammaproteobacteria</taxon>
        <taxon>Lysobacterales</taxon>
        <taxon>Lysobacteraceae</taxon>
        <taxon>Stenotrophomonas</taxon>
        <taxon>Stenotrophomonas maltophilia group</taxon>
    </lineage>
</organism>
<name>UPPP_STRM5</name>
<evidence type="ECO:0000255" key="1">
    <source>
        <dbReference type="HAMAP-Rule" id="MF_01006"/>
    </source>
</evidence>
<sequence>MSDLLSALLLGILEGLTEFLPISSTGHLLIAQHWLGARSDFFNIVIQAGAIVAVVLVFRQRLLQLATGFGQRENREYVFKLGAAFLVTAVVGLVVRKAGWSLPETVSPVAWALIIGGIWMLLVEAYTARLPDRDQVTWTVAIGVGLAQVVAGVFPGTSRSASAIFLAMLLGLSRRAAAAEFVFLVGIPTMFAASAYTFLEMAKAGQLGSENWTEVGVAFLAAAVTGFVVVKWLMGYIKSHKFTAFALYRIALGAALLLWLPSGS</sequence>
<proteinExistence type="inferred from homology"/>
<feature type="chain" id="PRO_1000197408" description="Undecaprenyl-diphosphatase">
    <location>
        <begin position="1"/>
        <end position="264"/>
    </location>
</feature>
<feature type="transmembrane region" description="Helical" evidence="1">
    <location>
        <begin position="38"/>
        <end position="58"/>
    </location>
</feature>
<feature type="transmembrane region" description="Helical" evidence="1">
    <location>
        <begin position="75"/>
        <end position="95"/>
    </location>
</feature>
<feature type="transmembrane region" description="Helical" evidence="1">
    <location>
        <begin position="106"/>
        <end position="126"/>
    </location>
</feature>
<feature type="transmembrane region" description="Helical" evidence="1">
    <location>
        <begin position="136"/>
        <end position="156"/>
    </location>
</feature>
<feature type="transmembrane region" description="Helical" evidence="1">
    <location>
        <begin position="181"/>
        <end position="201"/>
    </location>
</feature>
<feature type="transmembrane region" description="Helical" evidence="1">
    <location>
        <begin position="217"/>
        <end position="237"/>
    </location>
</feature>
<feature type="transmembrane region" description="Helical" evidence="1">
    <location>
        <begin position="242"/>
        <end position="262"/>
    </location>
</feature>
<gene>
    <name evidence="1" type="primary">uppP</name>
    <name type="ordered locus">Smal_0108</name>
</gene>
<reference key="1">
    <citation type="submission" date="2008-06" db="EMBL/GenBank/DDBJ databases">
        <title>Complete sequence of Stenotrophomonas maltophilia R551-3.</title>
        <authorList>
            <consortium name="US DOE Joint Genome Institute"/>
            <person name="Lucas S."/>
            <person name="Copeland A."/>
            <person name="Lapidus A."/>
            <person name="Glavina del Rio T."/>
            <person name="Dalin E."/>
            <person name="Tice H."/>
            <person name="Pitluck S."/>
            <person name="Chain P."/>
            <person name="Malfatti S."/>
            <person name="Shin M."/>
            <person name="Vergez L."/>
            <person name="Lang D."/>
            <person name="Schmutz J."/>
            <person name="Larimer F."/>
            <person name="Land M."/>
            <person name="Hauser L."/>
            <person name="Kyrpides N."/>
            <person name="Mikhailova N."/>
            <person name="Taghavi S."/>
            <person name="Monchy S."/>
            <person name="Newman L."/>
            <person name="Vangronsveld J."/>
            <person name="van der Lelie D."/>
            <person name="Richardson P."/>
        </authorList>
    </citation>
    <scope>NUCLEOTIDE SEQUENCE [LARGE SCALE GENOMIC DNA]</scope>
    <source>
        <strain>R551-3</strain>
    </source>
</reference>
<protein>
    <recommendedName>
        <fullName evidence="1">Undecaprenyl-diphosphatase</fullName>
        <ecNumber evidence="1">3.6.1.27</ecNumber>
    </recommendedName>
    <alternativeName>
        <fullName evidence="1">Bacitracin resistance protein</fullName>
    </alternativeName>
    <alternativeName>
        <fullName evidence="1">Undecaprenyl pyrophosphate phosphatase</fullName>
    </alternativeName>
</protein>
<keyword id="KW-0046">Antibiotic resistance</keyword>
<keyword id="KW-0997">Cell inner membrane</keyword>
<keyword id="KW-1003">Cell membrane</keyword>
<keyword id="KW-0133">Cell shape</keyword>
<keyword id="KW-0961">Cell wall biogenesis/degradation</keyword>
<keyword id="KW-0378">Hydrolase</keyword>
<keyword id="KW-0472">Membrane</keyword>
<keyword id="KW-0573">Peptidoglycan synthesis</keyword>
<keyword id="KW-0812">Transmembrane</keyword>
<keyword id="KW-1133">Transmembrane helix</keyword>
<accession>B4SRU3</accession>
<dbReference type="EC" id="3.6.1.27" evidence="1"/>
<dbReference type="EMBL" id="CP001111">
    <property type="protein sequence ID" value="ACF49813.1"/>
    <property type="molecule type" value="Genomic_DNA"/>
</dbReference>
<dbReference type="RefSeq" id="WP_012509682.1">
    <property type="nucleotide sequence ID" value="NC_011071.1"/>
</dbReference>
<dbReference type="SMR" id="B4SRU3"/>
<dbReference type="STRING" id="391008.Smal_0108"/>
<dbReference type="KEGG" id="smt:Smal_0108"/>
<dbReference type="eggNOG" id="COG1968">
    <property type="taxonomic scope" value="Bacteria"/>
</dbReference>
<dbReference type="HOGENOM" id="CLU_060296_2_0_6"/>
<dbReference type="OrthoDB" id="9808289at2"/>
<dbReference type="Proteomes" id="UP000001867">
    <property type="component" value="Chromosome"/>
</dbReference>
<dbReference type="GO" id="GO:0005886">
    <property type="term" value="C:plasma membrane"/>
    <property type="evidence" value="ECO:0007669"/>
    <property type="project" value="UniProtKB-SubCell"/>
</dbReference>
<dbReference type="GO" id="GO:0050380">
    <property type="term" value="F:undecaprenyl-diphosphatase activity"/>
    <property type="evidence" value="ECO:0007669"/>
    <property type="project" value="UniProtKB-UniRule"/>
</dbReference>
<dbReference type="GO" id="GO:0071555">
    <property type="term" value="P:cell wall organization"/>
    <property type="evidence" value="ECO:0007669"/>
    <property type="project" value="UniProtKB-KW"/>
</dbReference>
<dbReference type="GO" id="GO:0009252">
    <property type="term" value="P:peptidoglycan biosynthetic process"/>
    <property type="evidence" value="ECO:0007669"/>
    <property type="project" value="UniProtKB-KW"/>
</dbReference>
<dbReference type="GO" id="GO:0008360">
    <property type="term" value="P:regulation of cell shape"/>
    <property type="evidence" value="ECO:0007669"/>
    <property type="project" value="UniProtKB-KW"/>
</dbReference>
<dbReference type="GO" id="GO:0046677">
    <property type="term" value="P:response to antibiotic"/>
    <property type="evidence" value="ECO:0007669"/>
    <property type="project" value="UniProtKB-UniRule"/>
</dbReference>
<dbReference type="HAMAP" id="MF_01006">
    <property type="entry name" value="Undec_diphosphatase"/>
    <property type="match status" value="1"/>
</dbReference>
<dbReference type="InterPro" id="IPR003824">
    <property type="entry name" value="UppP"/>
</dbReference>
<dbReference type="NCBIfam" id="NF001390">
    <property type="entry name" value="PRK00281.1-4"/>
    <property type="match status" value="1"/>
</dbReference>
<dbReference type="PANTHER" id="PTHR30622">
    <property type="entry name" value="UNDECAPRENYL-DIPHOSPHATASE"/>
    <property type="match status" value="1"/>
</dbReference>
<dbReference type="PANTHER" id="PTHR30622:SF3">
    <property type="entry name" value="UNDECAPRENYL-DIPHOSPHATASE"/>
    <property type="match status" value="1"/>
</dbReference>
<dbReference type="Pfam" id="PF02673">
    <property type="entry name" value="BacA"/>
    <property type="match status" value="1"/>
</dbReference>